<evidence type="ECO:0000250" key="1"/>
<evidence type="ECO:0000255" key="2"/>
<evidence type="ECO:0000305" key="3"/>
<keyword id="KW-0472">Membrane</keyword>
<keyword id="KW-1185">Reference proteome</keyword>
<keyword id="KW-0677">Repeat</keyword>
<keyword id="KW-0812">Transmembrane</keyword>
<keyword id="KW-1133">Transmembrane helix</keyword>
<keyword id="KW-0813">Transport</keyword>
<accession>Q9NHW7</accession>
<accession>Q0IG28</accession>
<sequence>MTESAGVKQLVGVADITENRNIWRMLVAEFLGTFFLVSIGIGSTMGWGGDYAPTMTQIAFTFGLVVATLAQAFGHVSGCHINPAVTIGLMITADISILKGAFYIVSQCVGAIAGAALIKAATPSDVIGGLGVTGIDPRLTAGQGVMIEALITFILVFVVHGVCDNRRSDIKGSAPLAIGLSITAGHLSAIKYTGASMNPARSFGPAVVMGNWTDQWVYWVGPIVGGILAGAVYRLFFKVRKGDEESYDF</sequence>
<proteinExistence type="evidence at transcript level"/>
<feature type="chain" id="PRO_0000063974" description="Aquaporin AQPAe.a">
    <location>
        <begin position="1"/>
        <end position="249"/>
    </location>
</feature>
<feature type="topological domain" description="Cytoplasmic" evidence="2">
    <location>
        <begin position="1"/>
        <end position="26"/>
    </location>
</feature>
<feature type="transmembrane region" description="Helical; Name=1" evidence="2">
    <location>
        <begin position="27"/>
        <end position="47"/>
    </location>
</feature>
<feature type="topological domain" description="Extracellular" evidence="2">
    <location>
        <begin position="48"/>
        <end position="57"/>
    </location>
</feature>
<feature type="transmembrane region" description="Helical; Name=2" evidence="2">
    <location>
        <begin position="58"/>
        <end position="78"/>
    </location>
</feature>
<feature type="topological domain" description="Cytoplasmic" evidence="2">
    <location>
        <begin position="79"/>
        <end position="100"/>
    </location>
</feature>
<feature type="transmembrane region" description="Helical; Name=3" evidence="2">
    <location>
        <begin position="101"/>
        <end position="121"/>
    </location>
</feature>
<feature type="topological domain" description="Extracellular" evidence="2">
    <location>
        <begin position="122"/>
        <end position="138"/>
    </location>
</feature>
<feature type="transmembrane region" description="Helical; Name=4" evidence="2">
    <location>
        <begin position="139"/>
        <end position="159"/>
    </location>
</feature>
<feature type="topological domain" description="Cytoplasmic" evidence="2">
    <location>
        <begin position="160"/>
        <end position="169"/>
    </location>
</feature>
<feature type="transmembrane region" description="Helical; Name=5" evidence="2">
    <location>
        <begin position="170"/>
        <end position="190"/>
    </location>
</feature>
<feature type="topological domain" description="Extracellular" evidence="2">
    <location>
        <begin position="191"/>
        <end position="211"/>
    </location>
</feature>
<feature type="transmembrane region" description="Helical; Name=6" evidence="2">
    <location>
        <begin position="212"/>
        <end position="232"/>
    </location>
</feature>
<feature type="topological domain" description="Cytoplasmic" evidence="2">
    <location>
        <begin position="233"/>
        <end position="249"/>
    </location>
</feature>
<feature type="short sequence motif" description="NPA 1">
    <location>
        <begin position="82"/>
        <end position="84"/>
    </location>
</feature>
<feature type="short sequence motif" description="NPA 2">
    <location>
        <begin position="198"/>
        <end position="200"/>
    </location>
</feature>
<feature type="sequence conflict" description="In Ref. 1; AAF64037." evidence="3" ref="1">
    <original>I</original>
    <variation>M</variation>
    <location>
        <position position="147"/>
    </location>
</feature>
<gene>
    <name type="ORF">AAEL003512</name>
</gene>
<reference key="1">
    <citation type="journal article" date="2000" name="Insect Mol. Biol.">
        <title>Cloning of an aquaporin-like cDNA and in situ hybridization in adults of the mosquito Aedes aegypti (Diptera: Culicidae).</title>
        <authorList>
            <person name="Pietrantonio P.V."/>
            <person name="Jagge C."/>
            <person name="Keeley L.L."/>
            <person name="Ross L.S."/>
        </authorList>
    </citation>
    <scope>NUCLEOTIDE SEQUENCE [MRNA]</scope>
    <source>
        <strain>UTMB</strain>
        <tissue>Malpighian tubule</tissue>
    </source>
</reference>
<reference key="2">
    <citation type="journal article" date="2007" name="Science">
        <title>Genome sequence of Aedes aegypti, a major arbovirus vector.</title>
        <authorList>
            <person name="Nene V."/>
            <person name="Wortman J.R."/>
            <person name="Lawson D."/>
            <person name="Haas B.J."/>
            <person name="Kodira C.D."/>
            <person name="Tu Z.J."/>
            <person name="Loftus B.J."/>
            <person name="Xi Z."/>
            <person name="Megy K."/>
            <person name="Grabherr M."/>
            <person name="Ren Q."/>
            <person name="Zdobnov E.M."/>
            <person name="Lobo N.F."/>
            <person name="Campbell K.S."/>
            <person name="Brown S.E."/>
            <person name="Bonaldo M.F."/>
            <person name="Zhu J."/>
            <person name="Sinkins S.P."/>
            <person name="Hogenkamp D.G."/>
            <person name="Amedeo P."/>
            <person name="Arensburger P."/>
            <person name="Atkinson P.W."/>
            <person name="Bidwell S.L."/>
            <person name="Biedler J."/>
            <person name="Birney E."/>
            <person name="Bruggner R.V."/>
            <person name="Costas J."/>
            <person name="Coy M.R."/>
            <person name="Crabtree J."/>
            <person name="Crawford M."/>
            <person name="DeBruyn B."/>
            <person name="DeCaprio D."/>
            <person name="Eiglmeier K."/>
            <person name="Eisenstadt E."/>
            <person name="El-Dorry H."/>
            <person name="Gelbart W.M."/>
            <person name="Gomes S.L."/>
            <person name="Hammond M."/>
            <person name="Hannick L.I."/>
            <person name="Hogan J.R."/>
            <person name="Holmes M.H."/>
            <person name="Jaffe D."/>
            <person name="Johnston S.J."/>
            <person name="Kennedy R.C."/>
            <person name="Koo H."/>
            <person name="Kravitz S."/>
            <person name="Kriventseva E.V."/>
            <person name="Kulp D."/>
            <person name="Labutti K."/>
            <person name="Lee E."/>
            <person name="Li S."/>
            <person name="Lovin D.D."/>
            <person name="Mao C."/>
            <person name="Mauceli E."/>
            <person name="Menck C.F."/>
            <person name="Miller J.R."/>
            <person name="Montgomery P."/>
            <person name="Mori A."/>
            <person name="Nascimento A.L."/>
            <person name="Naveira H.F."/>
            <person name="Nusbaum C."/>
            <person name="O'Leary S.B."/>
            <person name="Orvis J."/>
            <person name="Pertea M."/>
            <person name="Quesneville H."/>
            <person name="Reidenbach K.R."/>
            <person name="Rogers Y.-H.C."/>
            <person name="Roth C.W."/>
            <person name="Schneider J.R."/>
            <person name="Schatz M."/>
            <person name="Shumway M."/>
            <person name="Stanke M."/>
            <person name="Stinson E.O."/>
            <person name="Tubio J.M.C."/>
            <person name="Vanzee J.P."/>
            <person name="Verjovski-Almeida S."/>
            <person name="Werner D."/>
            <person name="White O.R."/>
            <person name="Wyder S."/>
            <person name="Zeng Q."/>
            <person name="Zhao Q."/>
            <person name="Zhao Y."/>
            <person name="Hill C.A."/>
            <person name="Raikhel A.S."/>
            <person name="Soares M.B."/>
            <person name="Knudson D.L."/>
            <person name="Lee N.H."/>
            <person name="Galagan J."/>
            <person name="Salzberg S.L."/>
            <person name="Paulsen I.T."/>
            <person name="Dimopoulos G."/>
            <person name="Collins F.H."/>
            <person name="Bruce B."/>
            <person name="Fraser-Liggett C.M."/>
            <person name="Severson D.W."/>
        </authorList>
    </citation>
    <scope>NUCLEOTIDE SEQUENCE [LARGE SCALE GENOMIC DNA]</scope>
    <source>
        <strain>LVPib12</strain>
    </source>
</reference>
<comment type="function">
    <text evidence="1">Forms a water-specific channel.</text>
</comment>
<comment type="subunit">
    <text evidence="1">Homotetramer.</text>
</comment>
<comment type="subcellular location">
    <subcellularLocation>
        <location>Membrane</location>
        <topology>Multi-pass membrane protein</topology>
    </subcellularLocation>
</comment>
<comment type="tissue specificity">
    <text>Localized in tracheolar cells associated with the Malpighian tubules.</text>
</comment>
<comment type="domain">
    <text>Aquaporins contain two tandem repeats each containing three membrane-spanning domains and a pore-forming loop with the signature motif Asn-Pro-Ala (NPA).</text>
</comment>
<comment type="similarity">
    <text evidence="3">Belongs to the MIP/aquaporin (TC 1.A.8) family.</text>
</comment>
<comment type="sequence caution" evidence="3">
    <conflict type="erroneous gene model prediction">
        <sequence resource="EMBL-CDS" id="EAT45185"/>
    </conflict>
</comment>
<name>AQP_AEDAE</name>
<dbReference type="EMBL" id="AF218314">
    <property type="protein sequence ID" value="AAF64037.1"/>
    <property type="molecule type" value="mRNA"/>
</dbReference>
<dbReference type="EMBL" id="CH477274">
    <property type="protein sequence ID" value="EAT45185.1"/>
    <property type="status" value="ALT_SEQ"/>
    <property type="molecule type" value="Genomic_DNA"/>
</dbReference>
<dbReference type="RefSeq" id="XP_001656931.1">
    <property type="nucleotide sequence ID" value="XM_001656881.1"/>
</dbReference>
<dbReference type="SMR" id="Q9NHW7"/>
<dbReference type="FunCoup" id="Q9NHW7">
    <property type="interactions" value="47"/>
</dbReference>
<dbReference type="STRING" id="7159.Q9NHW7"/>
<dbReference type="TCDB" id="1.A.8.8.30">
    <property type="family name" value="the major intrinsic protein (mip) family"/>
</dbReference>
<dbReference type="PaxDb" id="7159-AAEL003512-PA"/>
<dbReference type="VEuPathDB" id="VectorBase:AAEL024675"/>
<dbReference type="eggNOG" id="KOG0223">
    <property type="taxonomic scope" value="Eukaryota"/>
</dbReference>
<dbReference type="HOGENOM" id="CLU_020019_3_3_1"/>
<dbReference type="InParanoid" id="Q9NHW7"/>
<dbReference type="Proteomes" id="UP000008820">
    <property type="component" value="Unassembled WGS sequence"/>
</dbReference>
<dbReference type="Proteomes" id="UP000682892">
    <property type="component" value="Chromosome 1"/>
</dbReference>
<dbReference type="GO" id="GO:0005886">
    <property type="term" value="C:plasma membrane"/>
    <property type="evidence" value="ECO:0007669"/>
    <property type="project" value="TreeGrafter"/>
</dbReference>
<dbReference type="GO" id="GO:0015267">
    <property type="term" value="F:channel activity"/>
    <property type="evidence" value="ECO:0007669"/>
    <property type="project" value="InterPro"/>
</dbReference>
<dbReference type="CDD" id="cd00333">
    <property type="entry name" value="MIP"/>
    <property type="match status" value="1"/>
</dbReference>
<dbReference type="FunFam" id="1.20.1080.10:FF:000009">
    <property type="entry name" value="aquaporin-4 isoform X1"/>
    <property type="match status" value="1"/>
</dbReference>
<dbReference type="Gene3D" id="1.20.1080.10">
    <property type="entry name" value="Glycerol uptake facilitator protein"/>
    <property type="match status" value="1"/>
</dbReference>
<dbReference type="InterPro" id="IPR023271">
    <property type="entry name" value="Aquaporin-like"/>
</dbReference>
<dbReference type="InterPro" id="IPR034294">
    <property type="entry name" value="Aquaporin_transptr"/>
</dbReference>
<dbReference type="InterPro" id="IPR000425">
    <property type="entry name" value="MIP"/>
</dbReference>
<dbReference type="InterPro" id="IPR022357">
    <property type="entry name" value="MIP_CS"/>
</dbReference>
<dbReference type="NCBIfam" id="TIGR00861">
    <property type="entry name" value="MIP"/>
    <property type="match status" value="1"/>
</dbReference>
<dbReference type="PANTHER" id="PTHR19139:SF291">
    <property type="entry name" value="AQUAPORIN"/>
    <property type="match status" value="1"/>
</dbReference>
<dbReference type="PANTHER" id="PTHR19139">
    <property type="entry name" value="AQUAPORIN TRANSPORTER"/>
    <property type="match status" value="1"/>
</dbReference>
<dbReference type="Pfam" id="PF00230">
    <property type="entry name" value="MIP"/>
    <property type="match status" value="1"/>
</dbReference>
<dbReference type="PRINTS" id="PR02016">
    <property type="entry name" value="AQUAPORIN4"/>
</dbReference>
<dbReference type="PRINTS" id="PR00783">
    <property type="entry name" value="MINTRINSICP"/>
</dbReference>
<dbReference type="SUPFAM" id="SSF81338">
    <property type="entry name" value="Aquaporin-like"/>
    <property type="match status" value="1"/>
</dbReference>
<dbReference type="PROSITE" id="PS00221">
    <property type="entry name" value="MIP"/>
    <property type="match status" value="1"/>
</dbReference>
<protein>
    <recommendedName>
        <fullName>Aquaporin AQPAe.a</fullName>
    </recommendedName>
</protein>
<organism>
    <name type="scientific">Aedes aegypti</name>
    <name type="common">Yellowfever mosquito</name>
    <name type="synonym">Culex aegypti</name>
    <dbReference type="NCBI Taxonomy" id="7159"/>
    <lineage>
        <taxon>Eukaryota</taxon>
        <taxon>Metazoa</taxon>
        <taxon>Ecdysozoa</taxon>
        <taxon>Arthropoda</taxon>
        <taxon>Hexapoda</taxon>
        <taxon>Insecta</taxon>
        <taxon>Pterygota</taxon>
        <taxon>Neoptera</taxon>
        <taxon>Endopterygota</taxon>
        <taxon>Diptera</taxon>
        <taxon>Nematocera</taxon>
        <taxon>Culicoidea</taxon>
        <taxon>Culicidae</taxon>
        <taxon>Culicinae</taxon>
        <taxon>Aedini</taxon>
        <taxon>Aedes</taxon>
        <taxon>Stegomyia</taxon>
    </lineage>
</organism>